<keyword id="KW-0687">Ribonucleoprotein</keyword>
<keyword id="KW-0689">Ribosomal protein</keyword>
<keyword id="KW-0694">RNA-binding</keyword>
<keyword id="KW-0699">rRNA-binding</keyword>
<keyword id="KW-0820">tRNA-binding</keyword>
<name>RL16_BURCH</name>
<feature type="chain" id="PRO_1000054587" description="Large ribosomal subunit protein uL16">
    <location>
        <begin position="1"/>
        <end position="138"/>
    </location>
</feature>
<feature type="region of interest" description="Disordered" evidence="2">
    <location>
        <begin position="1"/>
        <end position="24"/>
    </location>
</feature>
<feature type="compositionally biased region" description="Basic residues" evidence="2">
    <location>
        <begin position="1"/>
        <end position="13"/>
    </location>
</feature>
<reference key="1">
    <citation type="submission" date="2006-08" db="EMBL/GenBank/DDBJ databases">
        <title>Complete sequence of chromosome 1 of Burkholderia cenocepacia HI2424.</title>
        <authorList>
            <person name="Copeland A."/>
            <person name="Lucas S."/>
            <person name="Lapidus A."/>
            <person name="Barry K."/>
            <person name="Detter J.C."/>
            <person name="Glavina del Rio T."/>
            <person name="Hammon N."/>
            <person name="Israni S."/>
            <person name="Pitluck S."/>
            <person name="Chain P."/>
            <person name="Malfatti S."/>
            <person name="Shin M."/>
            <person name="Vergez L."/>
            <person name="Schmutz J."/>
            <person name="Larimer F."/>
            <person name="Land M."/>
            <person name="Hauser L."/>
            <person name="Kyrpides N."/>
            <person name="Kim E."/>
            <person name="LiPuma J.J."/>
            <person name="Gonzalez C.F."/>
            <person name="Konstantinidis K."/>
            <person name="Tiedje J.M."/>
            <person name="Richardson P."/>
        </authorList>
    </citation>
    <scope>NUCLEOTIDE SEQUENCE [LARGE SCALE GENOMIC DNA]</scope>
    <source>
        <strain>HI2424</strain>
    </source>
</reference>
<dbReference type="EMBL" id="CP000458">
    <property type="protein sequence ID" value="ABK07109.1"/>
    <property type="molecule type" value="Genomic_DNA"/>
</dbReference>
<dbReference type="RefSeq" id="WP_006482873.1">
    <property type="nucleotide sequence ID" value="NC_008542.1"/>
</dbReference>
<dbReference type="SMR" id="A0K3N2"/>
<dbReference type="GeneID" id="93193444"/>
<dbReference type="KEGG" id="bch:Bcen2424_0355"/>
<dbReference type="HOGENOM" id="CLU_078858_2_1_4"/>
<dbReference type="GO" id="GO:0022625">
    <property type="term" value="C:cytosolic large ribosomal subunit"/>
    <property type="evidence" value="ECO:0007669"/>
    <property type="project" value="TreeGrafter"/>
</dbReference>
<dbReference type="GO" id="GO:0019843">
    <property type="term" value="F:rRNA binding"/>
    <property type="evidence" value="ECO:0007669"/>
    <property type="project" value="UniProtKB-UniRule"/>
</dbReference>
<dbReference type="GO" id="GO:0003735">
    <property type="term" value="F:structural constituent of ribosome"/>
    <property type="evidence" value="ECO:0007669"/>
    <property type="project" value="InterPro"/>
</dbReference>
<dbReference type="GO" id="GO:0000049">
    <property type="term" value="F:tRNA binding"/>
    <property type="evidence" value="ECO:0007669"/>
    <property type="project" value="UniProtKB-KW"/>
</dbReference>
<dbReference type="GO" id="GO:0006412">
    <property type="term" value="P:translation"/>
    <property type="evidence" value="ECO:0007669"/>
    <property type="project" value="UniProtKB-UniRule"/>
</dbReference>
<dbReference type="CDD" id="cd01433">
    <property type="entry name" value="Ribosomal_L16_L10e"/>
    <property type="match status" value="1"/>
</dbReference>
<dbReference type="FunFam" id="3.90.1170.10:FF:000001">
    <property type="entry name" value="50S ribosomal protein L16"/>
    <property type="match status" value="1"/>
</dbReference>
<dbReference type="Gene3D" id="3.90.1170.10">
    <property type="entry name" value="Ribosomal protein L10e/L16"/>
    <property type="match status" value="1"/>
</dbReference>
<dbReference type="HAMAP" id="MF_01342">
    <property type="entry name" value="Ribosomal_uL16"/>
    <property type="match status" value="1"/>
</dbReference>
<dbReference type="InterPro" id="IPR047873">
    <property type="entry name" value="Ribosomal_uL16"/>
</dbReference>
<dbReference type="InterPro" id="IPR000114">
    <property type="entry name" value="Ribosomal_uL16_bact-type"/>
</dbReference>
<dbReference type="InterPro" id="IPR020798">
    <property type="entry name" value="Ribosomal_uL16_CS"/>
</dbReference>
<dbReference type="InterPro" id="IPR016180">
    <property type="entry name" value="Ribosomal_uL16_dom"/>
</dbReference>
<dbReference type="InterPro" id="IPR036920">
    <property type="entry name" value="Ribosomal_uL16_sf"/>
</dbReference>
<dbReference type="NCBIfam" id="TIGR01164">
    <property type="entry name" value="rplP_bact"/>
    <property type="match status" value="1"/>
</dbReference>
<dbReference type="PANTHER" id="PTHR12220">
    <property type="entry name" value="50S/60S RIBOSOMAL PROTEIN L16"/>
    <property type="match status" value="1"/>
</dbReference>
<dbReference type="PANTHER" id="PTHR12220:SF13">
    <property type="entry name" value="LARGE RIBOSOMAL SUBUNIT PROTEIN UL16M"/>
    <property type="match status" value="1"/>
</dbReference>
<dbReference type="Pfam" id="PF00252">
    <property type="entry name" value="Ribosomal_L16"/>
    <property type="match status" value="1"/>
</dbReference>
<dbReference type="PRINTS" id="PR00060">
    <property type="entry name" value="RIBOSOMALL16"/>
</dbReference>
<dbReference type="SUPFAM" id="SSF54686">
    <property type="entry name" value="Ribosomal protein L16p/L10e"/>
    <property type="match status" value="1"/>
</dbReference>
<dbReference type="PROSITE" id="PS00586">
    <property type="entry name" value="RIBOSOMAL_L16_1"/>
    <property type="match status" value="1"/>
</dbReference>
<evidence type="ECO:0000255" key="1">
    <source>
        <dbReference type="HAMAP-Rule" id="MF_01342"/>
    </source>
</evidence>
<evidence type="ECO:0000256" key="2">
    <source>
        <dbReference type="SAM" id="MobiDB-lite"/>
    </source>
</evidence>
<evidence type="ECO:0000305" key="3"/>
<protein>
    <recommendedName>
        <fullName evidence="1">Large ribosomal subunit protein uL16</fullName>
    </recommendedName>
    <alternativeName>
        <fullName evidence="3">50S ribosomal protein L16</fullName>
    </alternativeName>
</protein>
<comment type="function">
    <text evidence="1">Binds 23S rRNA and is also seen to make contacts with the A and possibly P site tRNAs.</text>
</comment>
<comment type="subunit">
    <text evidence="1">Part of the 50S ribosomal subunit.</text>
</comment>
<comment type="similarity">
    <text evidence="1">Belongs to the universal ribosomal protein uL16 family.</text>
</comment>
<accession>A0K3N2</accession>
<organism>
    <name type="scientific">Burkholderia cenocepacia (strain HI2424)</name>
    <dbReference type="NCBI Taxonomy" id="331272"/>
    <lineage>
        <taxon>Bacteria</taxon>
        <taxon>Pseudomonadati</taxon>
        <taxon>Pseudomonadota</taxon>
        <taxon>Betaproteobacteria</taxon>
        <taxon>Burkholderiales</taxon>
        <taxon>Burkholderiaceae</taxon>
        <taxon>Burkholderia</taxon>
        <taxon>Burkholderia cepacia complex</taxon>
    </lineage>
</organism>
<gene>
    <name evidence="1" type="primary">rplP</name>
    <name type="ordered locus">Bcen2424_0355</name>
</gene>
<proteinExistence type="inferred from homology"/>
<sequence>MLQPKRRKYRKEQKGRNTGKATRGNAVSFGEFGLKAIGRGRLTARQIEAARRAMTRHIKRGGRIWIRIFPDKPISQKPAEVRMGNGKGNPEYYVAEIQPGKMLYEMDGVTEELAREAFRLAAAKLPLKTAFIVRQLGA</sequence>